<protein>
    <recommendedName>
        <fullName evidence="1">Glutamate 5-kinase 2</fullName>
        <ecNumber evidence="1">2.7.2.11</ecNumber>
    </recommendedName>
    <alternativeName>
        <fullName evidence="1">Gamma-glutamyl kinase 2</fullName>
        <shortName evidence="1">GK 2</shortName>
    </alternativeName>
</protein>
<feature type="chain" id="PRO_0000109714" description="Glutamate 5-kinase 2">
    <location>
        <begin position="1"/>
        <end position="284"/>
    </location>
</feature>
<feature type="binding site" evidence="1">
    <location>
        <position position="26"/>
    </location>
    <ligand>
        <name>ATP</name>
        <dbReference type="ChEBI" id="CHEBI:30616"/>
    </ligand>
</feature>
<feature type="binding site" evidence="1">
    <location>
        <position position="67"/>
    </location>
    <ligand>
        <name>substrate</name>
    </ligand>
</feature>
<feature type="binding site" evidence="1">
    <location>
        <position position="154"/>
    </location>
    <ligand>
        <name>substrate</name>
    </ligand>
</feature>
<feature type="binding site" evidence="1">
    <location>
        <position position="166"/>
    </location>
    <ligand>
        <name>substrate</name>
    </ligand>
</feature>
<feature type="binding site" evidence="1">
    <location>
        <begin position="186"/>
        <end position="187"/>
    </location>
    <ligand>
        <name>ATP</name>
        <dbReference type="ChEBI" id="CHEBI:30616"/>
    </ligand>
</feature>
<feature type="binding site" evidence="1">
    <location>
        <begin position="228"/>
        <end position="234"/>
    </location>
    <ligand>
        <name>ATP</name>
        <dbReference type="ChEBI" id="CHEBI:30616"/>
    </ligand>
</feature>
<organism>
    <name type="scientific">Mesorhizobium japonicum (strain LMG 29417 / CECT 9101 / MAFF 303099)</name>
    <name type="common">Mesorhizobium loti (strain MAFF 303099)</name>
    <dbReference type="NCBI Taxonomy" id="266835"/>
    <lineage>
        <taxon>Bacteria</taxon>
        <taxon>Pseudomonadati</taxon>
        <taxon>Pseudomonadota</taxon>
        <taxon>Alphaproteobacteria</taxon>
        <taxon>Hyphomicrobiales</taxon>
        <taxon>Phyllobacteriaceae</taxon>
        <taxon>Mesorhizobium</taxon>
    </lineage>
</organism>
<gene>
    <name evidence="1" type="primary">proB2</name>
    <name type="ordered locus">mlr6298</name>
</gene>
<sequence length="284" mass="30683">MQEKIRETCLATKTVKLLSARRLIVKIGSAVVADAETGEIRGPWLETLIKDVVRFFARGQQVIIVTSGAVAAGSRHFKQLDRSLRIEEKQAAAAIGQIRLMIAYEQSLKRHGFGLGQVLLTSADVDNQRCRLNARSAFQQLLNVGAVPVINENDATATPEVCLGDNDRLAARVAQIAKADLLILLSDVDGLFTEDPHDNPLARMIPEVRRITPEIEIMASLSPARHGSGGMVTKLMAARIAMEAGCNVVIAKGSKSYPLAAIENGAPSTWFIPPARETATRGGR</sequence>
<reference key="1">
    <citation type="journal article" date="2000" name="DNA Res.">
        <title>Complete genome structure of the nitrogen-fixing symbiotic bacterium Mesorhizobium loti.</title>
        <authorList>
            <person name="Kaneko T."/>
            <person name="Nakamura Y."/>
            <person name="Sato S."/>
            <person name="Asamizu E."/>
            <person name="Kato T."/>
            <person name="Sasamoto S."/>
            <person name="Watanabe A."/>
            <person name="Idesawa K."/>
            <person name="Ishikawa A."/>
            <person name="Kawashima K."/>
            <person name="Kimura T."/>
            <person name="Kishida Y."/>
            <person name="Kiyokawa C."/>
            <person name="Kohara M."/>
            <person name="Matsumoto M."/>
            <person name="Matsuno A."/>
            <person name="Mochizuki Y."/>
            <person name="Nakayama S."/>
            <person name="Nakazaki N."/>
            <person name="Shimpo S."/>
            <person name="Sugimoto M."/>
            <person name="Takeuchi C."/>
            <person name="Yamada M."/>
            <person name="Tabata S."/>
        </authorList>
    </citation>
    <scope>NUCLEOTIDE SEQUENCE [LARGE SCALE GENOMIC DNA]</scope>
    <source>
        <strain>LMG 29417 / CECT 9101 / MAFF 303099</strain>
    </source>
</reference>
<name>PROB2_RHILO</name>
<proteinExistence type="inferred from homology"/>
<evidence type="ECO:0000255" key="1">
    <source>
        <dbReference type="HAMAP-Rule" id="MF_00456"/>
    </source>
</evidence>
<dbReference type="EC" id="2.7.2.11" evidence="1"/>
<dbReference type="EMBL" id="BA000012">
    <property type="protein sequence ID" value="BAB52617.1"/>
    <property type="molecule type" value="Genomic_DNA"/>
</dbReference>
<dbReference type="RefSeq" id="WP_010913936.1">
    <property type="nucleotide sequence ID" value="NC_002678.2"/>
</dbReference>
<dbReference type="SMR" id="Q989S7"/>
<dbReference type="KEGG" id="mlo:mlr6298"/>
<dbReference type="PATRIC" id="fig|266835.9.peg.5004"/>
<dbReference type="eggNOG" id="COG0263">
    <property type="taxonomic scope" value="Bacteria"/>
</dbReference>
<dbReference type="HOGENOM" id="CLU_025400_0_2_5"/>
<dbReference type="UniPathway" id="UPA00098">
    <property type="reaction ID" value="UER00359"/>
</dbReference>
<dbReference type="Proteomes" id="UP000000552">
    <property type="component" value="Chromosome"/>
</dbReference>
<dbReference type="GO" id="GO:0005829">
    <property type="term" value="C:cytosol"/>
    <property type="evidence" value="ECO:0007669"/>
    <property type="project" value="TreeGrafter"/>
</dbReference>
<dbReference type="GO" id="GO:0005524">
    <property type="term" value="F:ATP binding"/>
    <property type="evidence" value="ECO:0007669"/>
    <property type="project" value="UniProtKB-KW"/>
</dbReference>
<dbReference type="GO" id="GO:0004349">
    <property type="term" value="F:glutamate 5-kinase activity"/>
    <property type="evidence" value="ECO:0007669"/>
    <property type="project" value="UniProtKB-UniRule"/>
</dbReference>
<dbReference type="GO" id="GO:0055129">
    <property type="term" value="P:L-proline biosynthetic process"/>
    <property type="evidence" value="ECO:0007669"/>
    <property type="project" value="UniProtKB-UniRule"/>
</dbReference>
<dbReference type="CDD" id="cd04242">
    <property type="entry name" value="AAK_G5K_ProB"/>
    <property type="match status" value="1"/>
</dbReference>
<dbReference type="FunFam" id="3.40.1160.10:FF:000006">
    <property type="entry name" value="Glutamate 5-kinase"/>
    <property type="match status" value="1"/>
</dbReference>
<dbReference type="Gene3D" id="3.40.1160.10">
    <property type="entry name" value="Acetylglutamate kinase-like"/>
    <property type="match status" value="1"/>
</dbReference>
<dbReference type="HAMAP" id="MF_00456">
    <property type="entry name" value="ProB"/>
    <property type="match status" value="1"/>
</dbReference>
<dbReference type="InterPro" id="IPR036393">
    <property type="entry name" value="AceGlu_kinase-like_sf"/>
</dbReference>
<dbReference type="InterPro" id="IPR001048">
    <property type="entry name" value="Asp/Glu/Uridylate_kinase"/>
</dbReference>
<dbReference type="InterPro" id="IPR041739">
    <property type="entry name" value="G5K_ProB"/>
</dbReference>
<dbReference type="InterPro" id="IPR001057">
    <property type="entry name" value="Glu/AcGlu_kinase"/>
</dbReference>
<dbReference type="InterPro" id="IPR011529">
    <property type="entry name" value="Glu_5kinase"/>
</dbReference>
<dbReference type="InterPro" id="IPR005715">
    <property type="entry name" value="Glu_5kinase/COase_Synthase"/>
</dbReference>
<dbReference type="InterPro" id="IPR019797">
    <property type="entry name" value="Glutamate_5-kinase_CS"/>
</dbReference>
<dbReference type="NCBIfam" id="TIGR01027">
    <property type="entry name" value="proB"/>
    <property type="match status" value="1"/>
</dbReference>
<dbReference type="PANTHER" id="PTHR43654">
    <property type="entry name" value="GLUTAMATE 5-KINASE"/>
    <property type="match status" value="1"/>
</dbReference>
<dbReference type="PANTHER" id="PTHR43654:SF1">
    <property type="entry name" value="ISOPENTENYL PHOSPHATE KINASE"/>
    <property type="match status" value="1"/>
</dbReference>
<dbReference type="Pfam" id="PF00696">
    <property type="entry name" value="AA_kinase"/>
    <property type="match status" value="1"/>
</dbReference>
<dbReference type="PIRSF" id="PIRSF000729">
    <property type="entry name" value="GK"/>
    <property type="match status" value="1"/>
</dbReference>
<dbReference type="PRINTS" id="PR00474">
    <property type="entry name" value="GLU5KINASE"/>
</dbReference>
<dbReference type="SUPFAM" id="SSF53633">
    <property type="entry name" value="Carbamate kinase-like"/>
    <property type="match status" value="1"/>
</dbReference>
<dbReference type="PROSITE" id="PS00902">
    <property type="entry name" value="GLUTAMATE_5_KINASE"/>
    <property type="match status" value="1"/>
</dbReference>
<keyword id="KW-0028">Amino-acid biosynthesis</keyword>
<keyword id="KW-0067">ATP-binding</keyword>
<keyword id="KW-0963">Cytoplasm</keyword>
<keyword id="KW-0418">Kinase</keyword>
<keyword id="KW-0547">Nucleotide-binding</keyword>
<keyword id="KW-0641">Proline biosynthesis</keyword>
<keyword id="KW-0808">Transferase</keyword>
<accession>Q989S7</accession>
<comment type="function">
    <text evidence="1">Catalyzes the transfer of a phosphate group to glutamate to form L-glutamate 5-phosphate.</text>
</comment>
<comment type="catalytic activity">
    <reaction evidence="1">
        <text>L-glutamate + ATP = L-glutamyl 5-phosphate + ADP</text>
        <dbReference type="Rhea" id="RHEA:14877"/>
        <dbReference type="ChEBI" id="CHEBI:29985"/>
        <dbReference type="ChEBI" id="CHEBI:30616"/>
        <dbReference type="ChEBI" id="CHEBI:58274"/>
        <dbReference type="ChEBI" id="CHEBI:456216"/>
        <dbReference type="EC" id="2.7.2.11"/>
    </reaction>
</comment>
<comment type="pathway">
    <text evidence="1">Amino-acid biosynthesis; L-proline biosynthesis; L-glutamate 5-semialdehyde from L-glutamate: step 1/2.</text>
</comment>
<comment type="subcellular location">
    <subcellularLocation>
        <location evidence="1">Cytoplasm</location>
    </subcellularLocation>
</comment>
<comment type="similarity">
    <text evidence="1">Belongs to the glutamate 5-kinase family.</text>
</comment>